<keyword id="KW-0963">Cytoplasm</keyword>
<keyword id="KW-0236">DNA replication inhibitor</keyword>
<keyword id="KW-0238">DNA-binding</keyword>
<keyword id="KW-1185">Reference proteome</keyword>
<proteinExistence type="inferred from homology"/>
<evidence type="ECO:0000255" key="1">
    <source>
        <dbReference type="HAMAP-Rule" id="MF_00908"/>
    </source>
</evidence>
<evidence type="ECO:0000305" key="2"/>
<sequence length="181" mass="20315">MKTIEVDDELYSYIASHTKHIGESASDILRRMLKFSAASQPAAPVTKEVRVASPAIVEAKPVKTIKDKVRAMRELLLSDEYAEQKRAVNRFMLLLSTLYSLDAQAFAEATESLHGRTRVYFAADEQTLLKNGNQTKPKHVPGTPYWVITNTNTGRKCSMIEHIMQSMQFPAELIEKVCGTI</sequence>
<dbReference type="EMBL" id="AE014075">
    <property type="protein sequence ID" value="AAN79247.1"/>
    <property type="status" value="ALT_INIT"/>
    <property type="molecule type" value="Genomic_DNA"/>
</dbReference>
<dbReference type="RefSeq" id="WP_000848387.1">
    <property type="nucleotide sequence ID" value="NZ_CP051263.1"/>
</dbReference>
<dbReference type="SMR" id="P0AFY9"/>
<dbReference type="STRING" id="199310.c0774"/>
<dbReference type="GeneID" id="93776797"/>
<dbReference type="KEGG" id="ecc:c0774"/>
<dbReference type="eggNOG" id="COG3057">
    <property type="taxonomic scope" value="Bacteria"/>
</dbReference>
<dbReference type="HOGENOM" id="CLU_099733_0_0_6"/>
<dbReference type="Proteomes" id="UP000001410">
    <property type="component" value="Chromosome"/>
</dbReference>
<dbReference type="GO" id="GO:0005737">
    <property type="term" value="C:cytoplasm"/>
    <property type="evidence" value="ECO:0007669"/>
    <property type="project" value="UniProtKB-SubCell"/>
</dbReference>
<dbReference type="GO" id="GO:0043565">
    <property type="term" value="F:sequence-specific DNA binding"/>
    <property type="evidence" value="ECO:0007669"/>
    <property type="project" value="UniProtKB-ARBA"/>
</dbReference>
<dbReference type="GO" id="GO:0032297">
    <property type="term" value="P:negative regulation of DNA-templated DNA replication initiation"/>
    <property type="evidence" value="ECO:0007669"/>
    <property type="project" value="UniProtKB-UniRule"/>
</dbReference>
<dbReference type="GO" id="GO:0006355">
    <property type="term" value="P:regulation of DNA-templated transcription"/>
    <property type="evidence" value="ECO:0007669"/>
    <property type="project" value="InterPro"/>
</dbReference>
<dbReference type="FunFam" id="1.10.1220.10:FF:000002">
    <property type="entry name" value="Negative modulator of initiation of replication"/>
    <property type="match status" value="1"/>
</dbReference>
<dbReference type="FunFam" id="1.20.1380.10:FF:000001">
    <property type="entry name" value="Negative modulator of initiation of replication"/>
    <property type="match status" value="1"/>
</dbReference>
<dbReference type="Gene3D" id="1.10.1220.10">
    <property type="entry name" value="Met repressor-like"/>
    <property type="match status" value="1"/>
</dbReference>
<dbReference type="Gene3D" id="1.20.1380.10">
    <property type="entry name" value="Replication modulator SeqA, C-terminal DNA-binding domain"/>
    <property type="match status" value="1"/>
</dbReference>
<dbReference type="HAMAP" id="MF_00908">
    <property type="entry name" value="SeqA"/>
    <property type="match status" value="1"/>
</dbReference>
<dbReference type="InterPro" id="IPR013321">
    <property type="entry name" value="Arc_rbn_hlx_hlx"/>
</dbReference>
<dbReference type="InterPro" id="IPR010985">
    <property type="entry name" value="Ribbon_hlx_hlx"/>
</dbReference>
<dbReference type="InterPro" id="IPR005621">
    <property type="entry name" value="SeqA"/>
</dbReference>
<dbReference type="InterPro" id="IPR026577">
    <property type="entry name" value="SeqA_DNA-bd_C"/>
</dbReference>
<dbReference type="InterPro" id="IPR036835">
    <property type="entry name" value="SeqA_DNA-bd_C_sf"/>
</dbReference>
<dbReference type="InterPro" id="IPR033761">
    <property type="entry name" value="SeqA_N"/>
</dbReference>
<dbReference type="NCBIfam" id="NF008389">
    <property type="entry name" value="PRK11187.1"/>
    <property type="match status" value="1"/>
</dbReference>
<dbReference type="Pfam" id="PF03925">
    <property type="entry name" value="SeqA"/>
    <property type="match status" value="1"/>
</dbReference>
<dbReference type="Pfam" id="PF17206">
    <property type="entry name" value="SeqA_N"/>
    <property type="match status" value="1"/>
</dbReference>
<dbReference type="PIRSF" id="PIRSF019401">
    <property type="entry name" value="SeqA"/>
    <property type="match status" value="1"/>
</dbReference>
<dbReference type="SUPFAM" id="SSF82808">
    <property type="entry name" value="Replication modulator SeqA, C-terminal DNA-binding domain"/>
    <property type="match status" value="1"/>
</dbReference>
<dbReference type="SUPFAM" id="SSF47598">
    <property type="entry name" value="Ribbon-helix-helix"/>
    <property type="match status" value="1"/>
</dbReference>
<comment type="function">
    <text evidence="1">Negative regulator of replication initiation, which contributes to regulation of DNA replication and ensures that replication initiation occurs exactly once per chromosome per cell cycle. Binds to pairs of hemimethylated GATC sequences in the oriC region, thus preventing assembly of replication proteins and re-initiation at newly replicated origins. Repression is relieved when the region becomes fully methylated.</text>
</comment>
<comment type="subunit">
    <text evidence="1">Homodimer. Polymerizes to form helical filaments.</text>
</comment>
<comment type="subcellular location">
    <subcellularLocation>
        <location evidence="1">Cytoplasm</location>
    </subcellularLocation>
</comment>
<comment type="similarity">
    <text evidence="1">Belongs to the SeqA family.</text>
</comment>
<comment type="sequence caution" evidence="2">
    <conflict type="erroneous initiation">
        <sequence resource="EMBL-CDS" id="AAN79247"/>
    </conflict>
</comment>
<name>SEQA_ECOL6</name>
<protein>
    <recommendedName>
        <fullName evidence="1">Negative modulator of initiation of replication</fullName>
    </recommendedName>
</protein>
<reference key="1">
    <citation type="journal article" date="2002" name="Proc. Natl. Acad. Sci. U.S.A.">
        <title>Extensive mosaic structure revealed by the complete genome sequence of uropathogenic Escherichia coli.</title>
        <authorList>
            <person name="Welch R.A."/>
            <person name="Burland V."/>
            <person name="Plunkett G. III"/>
            <person name="Redford P."/>
            <person name="Roesch P."/>
            <person name="Rasko D."/>
            <person name="Buckles E.L."/>
            <person name="Liou S.-R."/>
            <person name="Boutin A."/>
            <person name="Hackett J."/>
            <person name="Stroud D."/>
            <person name="Mayhew G.F."/>
            <person name="Rose D.J."/>
            <person name="Zhou S."/>
            <person name="Schwartz D.C."/>
            <person name="Perna N.T."/>
            <person name="Mobley H.L.T."/>
            <person name="Donnenberg M.S."/>
            <person name="Blattner F.R."/>
        </authorList>
    </citation>
    <scope>NUCLEOTIDE SEQUENCE [LARGE SCALE GENOMIC DNA]</scope>
    <source>
        <strain>CFT073 / ATCC 700928 / UPEC</strain>
    </source>
</reference>
<feature type="chain" id="PRO_0000097685" description="Negative modulator of initiation of replication">
    <location>
        <begin position="1"/>
        <end position="181"/>
    </location>
</feature>
<feature type="region of interest" description="Interaction with DNA" evidence="1">
    <location>
        <begin position="87"/>
        <end position="88"/>
    </location>
</feature>
<feature type="region of interest" description="Interaction with DNA" evidence="1">
    <location>
        <begin position="116"/>
        <end position="120"/>
    </location>
</feature>
<feature type="region of interest" description="Interaction with DNA" evidence="1">
    <location>
        <begin position="150"/>
        <end position="156"/>
    </location>
</feature>
<organism>
    <name type="scientific">Escherichia coli O6:H1 (strain CFT073 / ATCC 700928 / UPEC)</name>
    <dbReference type="NCBI Taxonomy" id="199310"/>
    <lineage>
        <taxon>Bacteria</taxon>
        <taxon>Pseudomonadati</taxon>
        <taxon>Pseudomonadota</taxon>
        <taxon>Gammaproteobacteria</taxon>
        <taxon>Enterobacterales</taxon>
        <taxon>Enterobacteriaceae</taxon>
        <taxon>Escherichia</taxon>
    </lineage>
</organism>
<gene>
    <name evidence="1" type="primary">seqA</name>
    <name type="ordered locus">c0774</name>
</gene>
<accession>P0AFY9</accession>
<accession>P36658</accession>